<proteinExistence type="evidence at transcript level"/>
<keyword id="KW-0997">Cell inner membrane</keyword>
<keyword id="KW-1003">Cell membrane</keyword>
<keyword id="KW-0472">Membrane</keyword>
<keyword id="KW-1185">Reference proteome</keyword>
<keyword id="KW-0812">Transmembrane</keyword>
<keyword id="KW-1133">Transmembrane helix</keyword>
<keyword id="KW-0813">Transport</keyword>
<gene>
    <name evidence="1" type="primary">mdtB</name>
    <name type="ordered locus">Z3244</name>
    <name type="ordered locus">ECs2883</name>
</gene>
<protein>
    <recommendedName>
        <fullName evidence="1">Multidrug resistance protein MdtB</fullName>
    </recommendedName>
    <alternativeName>
        <fullName evidence="1">Multidrug transporter MdtB</fullName>
    </alternativeName>
</protein>
<reference key="1">
    <citation type="journal article" date="2001" name="Nature">
        <title>Genome sequence of enterohaemorrhagic Escherichia coli O157:H7.</title>
        <authorList>
            <person name="Perna N.T."/>
            <person name="Plunkett G. III"/>
            <person name="Burland V."/>
            <person name="Mau B."/>
            <person name="Glasner J.D."/>
            <person name="Rose D.J."/>
            <person name="Mayhew G.F."/>
            <person name="Evans P.S."/>
            <person name="Gregor J."/>
            <person name="Kirkpatrick H.A."/>
            <person name="Posfai G."/>
            <person name="Hackett J."/>
            <person name="Klink S."/>
            <person name="Boutin A."/>
            <person name="Shao Y."/>
            <person name="Miller L."/>
            <person name="Grotbeck E.J."/>
            <person name="Davis N.W."/>
            <person name="Lim A."/>
            <person name="Dimalanta E.T."/>
            <person name="Potamousis K."/>
            <person name="Apodaca J."/>
            <person name="Anantharaman T.S."/>
            <person name="Lin J."/>
            <person name="Yen G."/>
            <person name="Schwartz D.C."/>
            <person name="Welch R.A."/>
            <person name="Blattner F.R."/>
        </authorList>
    </citation>
    <scope>NUCLEOTIDE SEQUENCE [LARGE SCALE GENOMIC DNA]</scope>
    <source>
        <strain>O157:H7 / EDL933 / ATCC 700927 / EHEC</strain>
    </source>
</reference>
<reference key="2">
    <citation type="journal article" date="2001" name="DNA Res.">
        <title>Complete genome sequence of enterohemorrhagic Escherichia coli O157:H7 and genomic comparison with a laboratory strain K-12.</title>
        <authorList>
            <person name="Hayashi T."/>
            <person name="Makino K."/>
            <person name="Ohnishi M."/>
            <person name="Kurokawa K."/>
            <person name="Ishii K."/>
            <person name="Yokoyama K."/>
            <person name="Han C.-G."/>
            <person name="Ohtsubo E."/>
            <person name="Nakayama K."/>
            <person name="Murata T."/>
            <person name="Tanaka M."/>
            <person name="Tobe T."/>
            <person name="Iida T."/>
            <person name="Takami H."/>
            <person name="Honda T."/>
            <person name="Sasakawa C."/>
            <person name="Ogasawara N."/>
            <person name="Yasunaga T."/>
            <person name="Kuhara S."/>
            <person name="Shiba T."/>
            <person name="Hattori M."/>
            <person name="Shinagawa H."/>
        </authorList>
    </citation>
    <scope>NUCLEOTIDE SEQUENCE [LARGE SCALE GENOMIC DNA]</scope>
    <source>
        <strain>O157:H7 / Sakai / RIMD 0509952 / EHEC</strain>
    </source>
</reference>
<feature type="chain" id="PRO_0000161823" description="Multidrug resistance protein MdtB">
    <location>
        <begin position="1"/>
        <end position="1040"/>
    </location>
</feature>
<feature type="transmembrane region" description="Helical" evidence="1">
    <location>
        <begin position="15"/>
        <end position="37"/>
    </location>
</feature>
<feature type="transmembrane region" description="Helical" evidence="1">
    <location>
        <begin position="345"/>
        <end position="362"/>
    </location>
</feature>
<feature type="transmembrane region" description="Helical" evidence="1">
    <location>
        <begin position="367"/>
        <end position="389"/>
    </location>
</feature>
<feature type="transmembrane region" description="Helical" evidence="1">
    <location>
        <begin position="396"/>
        <end position="418"/>
    </location>
</feature>
<feature type="transmembrane region" description="Helical" evidence="1">
    <location>
        <begin position="438"/>
        <end position="460"/>
    </location>
</feature>
<feature type="transmembrane region" description="Helical" evidence="1">
    <location>
        <begin position="472"/>
        <end position="494"/>
    </location>
</feature>
<feature type="transmembrane region" description="Helical" evidence="1">
    <location>
        <begin position="535"/>
        <end position="557"/>
    </location>
</feature>
<feature type="transmembrane region" description="Helical" evidence="1">
    <location>
        <begin position="867"/>
        <end position="889"/>
    </location>
</feature>
<feature type="transmembrane region" description="Helical" evidence="1">
    <location>
        <begin position="909"/>
        <end position="931"/>
    </location>
</feature>
<feature type="transmembrane region" description="Helical" evidence="1">
    <location>
        <begin position="968"/>
        <end position="990"/>
    </location>
</feature>
<feature type="transmembrane region" description="Helical" evidence="1">
    <location>
        <begin position="1000"/>
        <end position="1022"/>
    </location>
</feature>
<name>MDTB_ECO57</name>
<comment type="function">
    <text evidence="1">The MdtABC tripartite complex confers resistance against novobiocin and deoxycholate.</text>
</comment>
<comment type="subunit">
    <text evidence="1">Part of a tripartite efflux system composed of MdtA, MdtB and MdtC. MdtB forms a heteromultimer with MdtC.</text>
</comment>
<comment type="subcellular location">
    <subcellularLocation>
        <location evidence="1">Cell inner membrane</location>
        <topology evidence="1">Multi-pass membrane protein</topology>
    </subcellularLocation>
</comment>
<comment type="induction">
    <text>The mdtABC operon is transcriptionally activated by BaeR.</text>
</comment>
<comment type="similarity">
    <text evidence="1">Belongs to the resistance-nodulation-cell division (RND) (TC 2.A.6) family. MdtB subfamily.</text>
</comment>
<accession>Q8X7J4</accession>
<accession>Q7ACM2</accession>
<sequence length="1040" mass="112082">MQVLPPSSTGGPSRLFIMRPVATTLLMVAILLAGIIGYRALPVSALPEVDYPTIQVVTLYPGASPDVMTSAVTAPLERQFGQMSGLKQMSSQSSGGASVITLQFQLTLPLDVAEQEVQAAINAATNLLPSDLPNPPVYSKVNPADPPIMTLAVTSTAMPMTQVEDMVETRVAQKISQISGVGLVTLSGGQRPAVRVKLNAQAIAALGLTSETVRTAITGANVNSAKGSLDGPSRAVTLSANDQMQSAEEYRQLIIAYQNGAPIRLGDVATVEQGAENSWLGAWANKEQAIVMNVQRQPGANIISTADSIRQMLPQLTESLPKSVKVTVLSDRTTNIRASVDDTQFELMMAIALVVMIIYLFLRNIPATIIPGVAVPLSLIGTFAVMVFLDFSINNLTLMALTIATGFVVDDAIVVIENISRYIEKGEKPLAAALKGAGEIGFTIISLTFSLIAVLIPLLFMGDIVGRLFREFAITLAVAILISAVVSLTLTPMMCARMLSQESLRKQNRFSRASEKMFDRIIAAYGRGLAKVLNHPWLTLSVALSTLLLSVLLWVFIPKGFFPVQDNGIIQGTLQAPQSSSFANMAQRQRQVADVILQDPAVQSLTSFVGVDGTNPSLNSARLQINLKPLDERDDRVQKVIARLQTAVDKVPGVDLFLQPTQDLTIDTQVSRTQYQFTLQATSLDALSTWVPQLMEKLQQLPQISDVSSDWQDKGLVAYVNVDRDSASRLGISMADVDNALYNAFGQRLISTIYTQANQYRVVLEHNTENTPGLAALDTIRLTSSDGGVVPLSSIAKIEQRFAPLSINHLDQFPVTTISFNVPDNYSLGDAVQAIMDTEKTLNLPVDITTQFQGSTLAFQSALGSTVWLIVAAVVAMYIVLGILYESFIHPITILSTLPTAGVGALLALMIAGSELDVIAIIGIILLIGIVKKNAIMMIDFALAAEREQGMSPRDAIYQACLLRFRPILMTTLAALLGALPLMLSTGVGAELRRPLGIGMVGGLIVSQVLTLFTTPVIYLLFDRLALWTKSRFARHEEEA</sequence>
<organism>
    <name type="scientific">Escherichia coli O157:H7</name>
    <dbReference type="NCBI Taxonomy" id="83334"/>
    <lineage>
        <taxon>Bacteria</taxon>
        <taxon>Pseudomonadati</taxon>
        <taxon>Pseudomonadota</taxon>
        <taxon>Gammaproteobacteria</taxon>
        <taxon>Enterobacterales</taxon>
        <taxon>Enterobacteriaceae</taxon>
        <taxon>Escherichia</taxon>
    </lineage>
</organism>
<evidence type="ECO:0000255" key="1">
    <source>
        <dbReference type="HAMAP-Rule" id="MF_01423"/>
    </source>
</evidence>
<dbReference type="EMBL" id="AE005174">
    <property type="protein sequence ID" value="AAG57138.1"/>
    <property type="molecule type" value="Genomic_DNA"/>
</dbReference>
<dbReference type="EMBL" id="BA000007">
    <property type="protein sequence ID" value="BAB36306.1"/>
    <property type="molecule type" value="Genomic_DNA"/>
</dbReference>
<dbReference type="PIR" id="C90989">
    <property type="entry name" value="C90989"/>
</dbReference>
<dbReference type="PIR" id="F85834">
    <property type="entry name" value="F85834"/>
</dbReference>
<dbReference type="RefSeq" id="WP_001197863.1">
    <property type="nucleotide sequence ID" value="NZ_VOAI01000013.1"/>
</dbReference>
<dbReference type="SMR" id="Q8X7J4"/>
<dbReference type="STRING" id="155864.Z3244"/>
<dbReference type="KEGG" id="ece:Z3244"/>
<dbReference type="KEGG" id="ecs:ECs_2883"/>
<dbReference type="PATRIC" id="fig|386585.9.peg.3015"/>
<dbReference type="eggNOG" id="COG0841">
    <property type="taxonomic scope" value="Bacteria"/>
</dbReference>
<dbReference type="HOGENOM" id="CLU_002755_1_2_6"/>
<dbReference type="Proteomes" id="UP000000558">
    <property type="component" value="Chromosome"/>
</dbReference>
<dbReference type="Proteomes" id="UP000002519">
    <property type="component" value="Chromosome"/>
</dbReference>
<dbReference type="GO" id="GO:0005886">
    <property type="term" value="C:plasma membrane"/>
    <property type="evidence" value="ECO:0007669"/>
    <property type="project" value="UniProtKB-SubCell"/>
</dbReference>
<dbReference type="GO" id="GO:0042910">
    <property type="term" value="F:xenobiotic transmembrane transporter activity"/>
    <property type="evidence" value="ECO:0007669"/>
    <property type="project" value="TreeGrafter"/>
</dbReference>
<dbReference type="FunFam" id="1.20.1640.10:FF:000001">
    <property type="entry name" value="Efflux pump membrane transporter"/>
    <property type="match status" value="1"/>
</dbReference>
<dbReference type="FunFam" id="3.30.70.1430:FF:000001">
    <property type="entry name" value="Efflux pump membrane transporter"/>
    <property type="match status" value="1"/>
</dbReference>
<dbReference type="FunFam" id="3.30.2090.10:FF:000003">
    <property type="entry name" value="Multidrug resistance protein MdtB"/>
    <property type="match status" value="1"/>
</dbReference>
<dbReference type="FunFam" id="3.30.2090.10:FF:000006">
    <property type="entry name" value="Multidrug resistance protein MdtB"/>
    <property type="match status" value="1"/>
</dbReference>
<dbReference type="Gene3D" id="3.30.70.1430">
    <property type="entry name" value="Multidrug efflux transporter AcrB pore domain"/>
    <property type="match status" value="2"/>
</dbReference>
<dbReference type="Gene3D" id="3.30.70.1440">
    <property type="entry name" value="Multidrug efflux transporter AcrB pore domain"/>
    <property type="match status" value="1"/>
</dbReference>
<dbReference type="Gene3D" id="3.30.70.1320">
    <property type="entry name" value="Multidrug efflux transporter AcrB pore domain like"/>
    <property type="match status" value="1"/>
</dbReference>
<dbReference type="Gene3D" id="3.30.2090.10">
    <property type="entry name" value="Multidrug efflux transporter AcrB TolC docking domain, DN and DC subdomains"/>
    <property type="match status" value="2"/>
</dbReference>
<dbReference type="Gene3D" id="1.20.1640.10">
    <property type="entry name" value="Multidrug efflux transporter AcrB transmembrane domain"/>
    <property type="match status" value="2"/>
</dbReference>
<dbReference type="HAMAP" id="MF_01423">
    <property type="entry name" value="MdtB"/>
    <property type="match status" value="1"/>
</dbReference>
<dbReference type="InterPro" id="IPR027463">
    <property type="entry name" value="AcrB_DN_DC_subdom"/>
</dbReference>
<dbReference type="InterPro" id="IPR001036">
    <property type="entry name" value="Acrflvin-R"/>
</dbReference>
<dbReference type="InterPro" id="IPR022831">
    <property type="entry name" value="Multidrug-R_MdtB"/>
</dbReference>
<dbReference type="NCBIfam" id="NF007798">
    <property type="entry name" value="PRK10503.1"/>
    <property type="match status" value="1"/>
</dbReference>
<dbReference type="NCBIfam" id="NF033617">
    <property type="entry name" value="RND_permease_2"/>
    <property type="match status" value="1"/>
</dbReference>
<dbReference type="PANTHER" id="PTHR32063">
    <property type="match status" value="1"/>
</dbReference>
<dbReference type="PANTHER" id="PTHR32063:SF21">
    <property type="entry name" value="MULTIDRUG RESISTANCE PROTEIN MDTB"/>
    <property type="match status" value="1"/>
</dbReference>
<dbReference type="Pfam" id="PF00873">
    <property type="entry name" value="ACR_tran"/>
    <property type="match status" value="1"/>
</dbReference>
<dbReference type="PRINTS" id="PR00702">
    <property type="entry name" value="ACRIFLAVINRP"/>
</dbReference>
<dbReference type="SUPFAM" id="SSF82693">
    <property type="entry name" value="Multidrug efflux transporter AcrB pore domain, PN1, PN2, PC1 and PC2 subdomains"/>
    <property type="match status" value="3"/>
</dbReference>
<dbReference type="SUPFAM" id="SSF82714">
    <property type="entry name" value="Multidrug efflux transporter AcrB TolC docking domain, DN and DC subdomains"/>
    <property type="match status" value="2"/>
</dbReference>
<dbReference type="SUPFAM" id="SSF82866">
    <property type="entry name" value="Multidrug efflux transporter AcrB transmembrane domain"/>
    <property type="match status" value="2"/>
</dbReference>